<evidence type="ECO:0000250" key="1">
    <source>
        <dbReference type="UniProtKB" id="P34405"/>
    </source>
</evidence>
<evidence type="ECO:0000255" key="2"/>
<evidence type="ECO:0000269" key="3">
    <source>
    </source>
</evidence>
<evidence type="ECO:0000303" key="4">
    <source>
    </source>
</evidence>
<evidence type="ECO:0000305" key="5"/>
<evidence type="ECO:0000305" key="6">
    <source>
    </source>
</evidence>
<dbReference type="GO" id="GO:0005576">
    <property type="term" value="C:extracellular region"/>
    <property type="evidence" value="ECO:0007669"/>
    <property type="project" value="UniProtKB-SubCell"/>
</dbReference>
<dbReference type="GO" id="GO:0007218">
    <property type="term" value="P:neuropeptide signaling pathway"/>
    <property type="evidence" value="ECO:0007669"/>
    <property type="project" value="UniProtKB-KW"/>
</dbReference>
<keyword id="KW-0027">Amidation</keyword>
<keyword id="KW-0903">Direct protein sequencing</keyword>
<keyword id="KW-0527">Neuropeptide</keyword>
<keyword id="KW-0964">Secreted</keyword>
<feature type="peptide" id="PRO_0000421503" description="Extended FMRFamide-4" evidence="3">
    <location>
        <begin position="1"/>
        <end position="9"/>
    </location>
</feature>
<feature type="modified residue" description="Leucine amide" evidence="3">
    <location>
        <position position="9"/>
    </location>
</feature>
<feature type="unsure residue" description="L or I" evidence="3">
    <location>
        <position position="7"/>
    </location>
</feature>
<feature type="unsure residue" description="L or I" evidence="3">
    <location>
        <position position="9"/>
    </location>
</feature>
<reference evidence="5" key="1">
    <citation type="journal article" date="2012" name="Syst. Biol.">
        <title>Peptidomics-based phylogeny and biogeography of Mantophasmatodea (Hexapoda).</title>
        <authorList>
            <person name="Predel R."/>
            <person name="Neupert S."/>
            <person name="Huetteroth W."/>
            <person name="Kahnt J."/>
            <person name="Waidelich D."/>
            <person name="Roth S."/>
        </authorList>
    </citation>
    <scope>PROTEIN SEQUENCE</scope>
    <scope>AMIDATION AT LEU-9</scope>
    <source>
        <tissue evidence="3">Thoracic perisympathetic organs</tissue>
    </source>
</reference>
<accession>B3A0A3</accession>
<protein>
    <recommendedName>
        <fullName evidence="4">Extended FMRFamide-4</fullName>
        <shortName evidence="4">FMRFa-4</shortName>
    </recommendedName>
</protein>
<organism>
    <name type="scientific">Austrophasma rawsonvillense</name>
    <name type="common">Gladiator</name>
    <name type="synonym">Heel-walker</name>
    <dbReference type="NCBI Taxonomy" id="253137"/>
    <lineage>
        <taxon>Eukaryota</taxon>
        <taxon>Metazoa</taxon>
        <taxon>Ecdysozoa</taxon>
        <taxon>Arthropoda</taxon>
        <taxon>Hexapoda</taxon>
        <taxon>Insecta</taxon>
        <taxon>Pterygota</taxon>
        <taxon>Neoptera</taxon>
        <taxon>Polyneoptera</taxon>
        <taxon>Mantophasmatodea</taxon>
        <taxon>Austrophasmatidae</taxon>
        <taxon>Austrophasma</taxon>
    </lineage>
</organism>
<comment type="function">
    <text evidence="1">FMRFamides and FMRFamide-like peptides are neuropeptides.</text>
</comment>
<comment type="subcellular location">
    <subcellularLocation>
        <location evidence="6">Secreted</location>
    </subcellularLocation>
</comment>
<comment type="similarity">
    <text evidence="2">Belongs to the FARP (FMRF amide related peptide) family.</text>
</comment>
<proteinExistence type="evidence at protein level"/>
<sequence length="9" mass="993">GVDSSFLRL</sequence>
<name>FAR4_AUSRA</name>